<name>T2FA_ARATH</name>
<reference key="1">
    <citation type="journal article" date="1999" name="Nature">
        <title>Sequence and analysis of chromosome 4 of the plant Arabidopsis thaliana.</title>
        <authorList>
            <person name="Mayer K.F.X."/>
            <person name="Schueller C."/>
            <person name="Wambutt R."/>
            <person name="Murphy G."/>
            <person name="Volckaert G."/>
            <person name="Pohl T."/>
            <person name="Duesterhoeft A."/>
            <person name="Stiekema W."/>
            <person name="Entian K.-D."/>
            <person name="Terryn N."/>
            <person name="Harris B."/>
            <person name="Ansorge W."/>
            <person name="Brandt P."/>
            <person name="Grivell L.A."/>
            <person name="Rieger M."/>
            <person name="Weichselgartner M."/>
            <person name="de Simone V."/>
            <person name="Obermaier B."/>
            <person name="Mache R."/>
            <person name="Mueller M."/>
            <person name="Kreis M."/>
            <person name="Delseny M."/>
            <person name="Puigdomenech P."/>
            <person name="Watson M."/>
            <person name="Schmidtheini T."/>
            <person name="Reichert B."/>
            <person name="Portetelle D."/>
            <person name="Perez-Alonso M."/>
            <person name="Boutry M."/>
            <person name="Bancroft I."/>
            <person name="Vos P."/>
            <person name="Hoheisel J."/>
            <person name="Zimmermann W."/>
            <person name="Wedler H."/>
            <person name="Ridley P."/>
            <person name="Langham S.-A."/>
            <person name="McCullagh B."/>
            <person name="Bilham L."/>
            <person name="Robben J."/>
            <person name="van der Schueren J."/>
            <person name="Grymonprez B."/>
            <person name="Chuang Y.-J."/>
            <person name="Vandenbussche F."/>
            <person name="Braeken M."/>
            <person name="Weltjens I."/>
            <person name="Voet M."/>
            <person name="Bastiaens I."/>
            <person name="Aert R."/>
            <person name="Defoor E."/>
            <person name="Weitzenegger T."/>
            <person name="Bothe G."/>
            <person name="Ramsperger U."/>
            <person name="Hilbert H."/>
            <person name="Braun M."/>
            <person name="Holzer E."/>
            <person name="Brandt A."/>
            <person name="Peters S."/>
            <person name="van Staveren M."/>
            <person name="Dirkse W."/>
            <person name="Mooijman P."/>
            <person name="Klein Lankhorst R."/>
            <person name="Rose M."/>
            <person name="Hauf J."/>
            <person name="Koetter P."/>
            <person name="Berneiser S."/>
            <person name="Hempel S."/>
            <person name="Feldpausch M."/>
            <person name="Lamberth S."/>
            <person name="Van den Daele H."/>
            <person name="De Keyser A."/>
            <person name="Buysshaert C."/>
            <person name="Gielen J."/>
            <person name="Villarroel R."/>
            <person name="De Clercq R."/>
            <person name="van Montagu M."/>
            <person name="Rogers J."/>
            <person name="Cronin A."/>
            <person name="Quail M.A."/>
            <person name="Bray-Allen S."/>
            <person name="Clark L."/>
            <person name="Doggett J."/>
            <person name="Hall S."/>
            <person name="Kay M."/>
            <person name="Lennard N."/>
            <person name="McLay K."/>
            <person name="Mayes R."/>
            <person name="Pettett A."/>
            <person name="Rajandream M.A."/>
            <person name="Lyne M."/>
            <person name="Benes V."/>
            <person name="Rechmann S."/>
            <person name="Borkova D."/>
            <person name="Bloecker H."/>
            <person name="Scharfe M."/>
            <person name="Grimm M."/>
            <person name="Loehnert T.-H."/>
            <person name="Dose S."/>
            <person name="de Haan M."/>
            <person name="Maarse A.C."/>
            <person name="Schaefer M."/>
            <person name="Mueller-Auer S."/>
            <person name="Gabel C."/>
            <person name="Fuchs M."/>
            <person name="Fartmann B."/>
            <person name="Granderath K."/>
            <person name="Dauner D."/>
            <person name="Herzl A."/>
            <person name="Neumann S."/>
            <person name="Argiriou A."/>
            <person name="Vitale D."/>
            <person name="Liguori R."/>
            <person name="Piravandi E."/>
            <person name="Massenet O."/>
            <person name="Quigley F."/>
            <person name="Clabauld G."/>
            <person name="Muendlein A."/>
            <person name="Felber R."/>
            <person name="Schnabl S."/>
            <person name="Hiller R."/>
            <person name="Schmidt W."/>
            <person name="Lecharny A."/>
            <person name="Aubourg S."/>
            <person name="Chefdor F."/>
            <person name="Cooke R."/>
            <person name="Berger C."/>
            <person name="Monfort A."/>
            <person name="Casacuberta E."/>
            <person name="Gibbons T."/>
            <person name="Weber N."/>
            <person name="Vandenbol M."/>
            <person name="Bargues M."/>
            <person name="Terol J."/>
            <person name="Torres A."/>
            <person name="Perez-Perez A."/>
            <person name="Purnelle B."/>
            <person name="Bent E."/>
            <person name="Johnson S."/>
            <person name="Tacon D."/>
            <person name="Jesse T."/>
            <person name="Heijnen L."/>
            <person name="Schwarz S."/>
            <person name="Scholler P."/>
            <person name="Heber S."/>
            <person name="Francs P."/>
            <person name="Bielke C."/>
            <person name="Frishman D."/>
            <person name="Haase D."/>
            <person name="Lemcke K."/>
            <person name="Mewes H.-W."/>
            <person name="Stocker S."/>
            <person name="Zaccaria P."/>
            <person name="Bevan M."/>
            <person name="Wilson R.K."/>
            <person name="de la Bastide M."/>
            <person name="Habermann K."/>
            <person name="Parnell L."/>
            <person name="Dedhia N."/>
            <person name="Gnoj L."/>
            <person name="Schutz K."/>
            <person name="Huang E."/>
            <person name="Spiegel L."/>
            <person name="Sekhon M."/>
            <person name="Murray J."/>
            <person name="Sheet P."/>
            <person name="Cordes M."/>
            <person name="Abu-Threideh J."/>
            <person name="Stoneking T."/>
            <person name="Kalicki J."/>
            <person name="Graves T."/>
            <person name="Harmon G."/>
            <person name="Edwards J."/>
            <person name="Latreille P."/>
            <person name="Courtney L."/>
            <person name="Cloud J."/>
            <person name="Abbott A."/>
            <person name="Scott K."/>
            <person name="Johnson D."/>
            <person name="Minx P."/>
            <person name="Bentley D."/>
            <person name="Fulton B."/>
            <person name="Miller N."/>
            <person name="Greco T."/>
            <person name="Kemp K."/>
            <person name="Kramer J."/>
            <person name="Fulton L."/>
            <person name="Mardis E."/>
            <person name="Dante M."/>
            <person name="Pepin K."/>
            <person name="Hillier L.W."/>
            <person name="Nelson J."/>
            <person name="Spieth J."/>
            <person name="Ryan E."/>
            <person name="Andrews S."/>
            <person name="Geisel C."/>
            <person name="Layman D."/>
            <person name="Du H."/>
            <person name="Ali J."/>
            <person name="Berghoff A."/>
            <person name="Jones K."/>
            <person name="Drone K."/>
            <person name="Cotton M."/>
            <person name="Joshu C."/>
            <person name="Antonoiu B."/>
            <person name="Zidanic M."/>
            <person name="Strong C."/>
            <person name="Sun H."/>
            <person name="Lamar B."/>
            <person name="Yordan C."/>
            <person name="Ma P."/>
            <person name="Zhong J."/>
            <person name="Preston R."/>
            <person name="Vil D."/>
            <person name="Shekher M."/>
            <person name="Matero A."/>
            <person name="Shah R."/>
            <person name="Swaby I.K."/>
            <person name="O'Shaughnessy A."/>
            <person name="Rodriguez M."/>
            <person name="Hoffman J."/>
            <person name="Till S."/>
            <person name="Granat S."/>
            <person name="Shohdy N."/>
            <person name="Hasegawa A."/>
            <person name="Hameed A."/>
            <person name="Lodhi M."/>
            <person name="Johnson A."/>
            <person name="Chen E."/>
            <person name="Marra M.A."/>
            <person name="Martienssen R."/>
            <person name="McCombie W.R."/>
        </authorList>
    </citation>
    <scope>NUCLEOTIDE SEQUENCE [LARGE SCALE GENOMIC DNA]</scope>
    <source>
        <strain>cv. Columbia</strain>
    </source>
</reference>
<reference key="2">
    <citation type="journal article" date="2017" name="Plant J.">
        <title>Araport11: a complete reannotation of the Arabidopsis thaliana reference genome.</title>
        <authorList>
            <person name="Cheng C.Y."/>
            <person name="Krishnakumar V."/>
            <person name="Chan A.P."/>
            <person name="Thibaud-Nissen F."/>
            <person name="Schobel S."/>
            <person name="Town C.D."/>
        </authorList>
    </citation>
    <scope>GENOME REANNOTATION</scope>
    <source>
        <strain>cv. Columbia</strain>
    </source>
</reference>
<reference key="3">
    <citation type="journal article" date="2004" name="Genome Res.">
        <title>Whole genome sequence comparisons and 'full-length' cDNA sequences: a combined approach to evaluate and improve Arabidopsis genome annotation.</title>
        <authorList>
            <person name="Castelli V."/>
            <person name="Aury J.-M."/>
            <person name="Jaillon O."/>
            <person name="Wincker P."/>
            <person name="Clepet C."/>
            <person name="Menard M."/>
            <person name="Cruaud C."/>
            <person name="Quetier F."/>
            <person name="Scarpelli C."/>
            <person name="Schaechter V."/>
            <person name="Temple G."/>
            <person name="Caboche M."/>
            <person name="Weissenbach J."/>
            <person name="Salanoubat M."/>
        </authorList>
    </citation>
    <scope>PARTIAL NUCLEOTIDE SEQUENCE [LARGE SCALE MRNA] (ISOFORM 2)</scope>
    <source>
        <strain>cv. Columbia</strain>
    </source>
</reference>
<reference key="4">
    <citation type="submission" date="2003-11" db="EMBL/GenBank/DDBJ databases">
        <title>Binary protein-protein interactions of Arabidopsis thaliana general transcription factors TFIIa, TFIIb, TFIId, TFIIe, and TFIIf.</title>
        <authorList>
            <person name="Lawit S.J."/>
            <person name="Gurley W.B."/>
        </authorList>
    </citation>
    <scope>NUCLEOTIDE SEQUENCE [MRNA] OF 1-640 (ISOFORM 1)</scope>
    <source>
        <strain>cv. Columbia</strain>
    </source>
</reference>
<reference key="5">
    <citation type="journal article" date="2006" name="Plant Physiol.">
        <title>Arabidopsis carboxyl-terminal domain phosphatase-like isoforms share common catalytic and interaction domains but have distinct in planta functions.</title>
        <authorList>
            <person name="Bang W."/>
            <person name="Kim S."/>
            <person name="Ueda A."/>
            <person name="Vikram M."/>
            <person name="Yun D."/>
            <person name="Bressan R.A."/>
            <person name="Hasegawa P.M."/>
            <person name="Bahk J."/>
            <person name="Koiwa H."/>
        </authorList>
    </citation>
    <scope>INTERACTION WITH CPL3 AND CPL4</scope>
    <scope>SUBCELLULAR LOCATION</scope>
</reference>
<evidence type="ECO:0000250" key="1"/>
<evidence type="ECO:0000256" key="2">
    <source>
        <dbReference type="SAM" id="MobiDB-lite"/>
    </source>
</evidence>
<evidence type="ECO:0000269" key="3">
    <source>
    </source>
</evidence>
<evidence type="ECO:0000305" key="4"/>
<feature type="chain" id="PRO_0000376088" description="Transcription initiation factor IIF subunit alpha">
    <location>
        <begin position="1"/>
        <end position="649"/>
    </location>
</feature>
<feature type="region of interest" description="Disordered" evidence="2">
    <location>
        <begin position="201"/>
        <end position="480"/>
    </location>
</feature>
<feature type="region of interest" description="Required for CPL3 and CPL4 binding">
    <location>
        <begin position="466"/>
        <end position="543"/>
    </location>
</feature>
<feature type="compositionally biased region" description="Acidic residues" evidence="2">
    <location>
        <begin position="229"/>
        <end position="247"/>
    </location>
</feature>
<feature type="compositionally biased region" description="Acidic residues" evidence="2">
    <location>
        <begin position="274"/>
        <end position="283"/>
    </location>
</feature>
<feature type="compositionally biased region" description="Acidic residues" evidence="2">
    <location>
        <begin position="293"/>
        <end position="308"/>
    </location>
</feature>
<feature type="compositionally biased region" description="Acidic residues" evidence="2">
    <location>
        <begin position="323"/>
        <end position="335"/>
    </location>
</feature>
<feature type="compositionally biased region" description="Acidic residues" evidence="2">
    <location>
        <begin position="355"/>
        <end position="371"/>
    </location>
</feature>
<feature type="compositionally biased region" description="Basic and acidic residues" evidence="2">
    <location>
        <begin position="380"/>
        <end position="389"/>
    </location>
</feature>
<feature type="compositionally biased region" description="Pro residues" evidence="2">
    <location>
        <begin position="396"/>
        <end position="410"/>
    </location>
</feature>
<feature type="compositionally biased region" description="Basic and acidic residues" evidence="2">
    <location>
        <begin position="434"/>
        <end position="449"/>
    </location>
</feature>
<feature type="compositionally biased region" description="Polar residues" evidence="2">
    <location>
        <begin position="450"/>
        <end position="459"/>
    </location>
</feature>
<feature type="compositionally biased region" description="Low complexity" evidence="2">
    <location>
        <begin position="466"/>
        <end position="477"/>
    </location>
</feature>
<feature type="splice variant" id="VSP_037404" description="In isoform 2." evidence="4">
    <location>
        <begin position="544"/>
        <end position="649"/>
    </location>
</feature>
<feature type="sequence conflict" description="In Ref. 4; AAR28013." evidence="4" ref="4">
    <original>A</original>
    <variation>T</variation>
    <location>
        <position position="617"/>
    </location>
</feature>
<protein>
    <recommendedName>
        <fullName>Transcription initiation factor IIF subunit alpha</fullName>
        <shortName>TFIIF-alpha</shortName>
    </recommendedName>
    <alternativeName>
        <fullName>General transcription factor IIF subunit 1</fullName>
    </alternativeName>
    <alternativeName>
        <fullName>Transcription initiation factor RAP74 homolog</fullName>
        <shortName>AtRAP74</shortName>
    </alternativeName>
</protein>
<gene>
    <name type="primary">RAP74</name>
    <name type="synonym">TF2Falpha</name>
    <name type="ordered locus">At4g12610</name>
    <name type="ORF">T1P17.200</name>
</gene>
<dbReference type="EMBL" id="AL049730">
    <property type="protein sequence ID" value="CAB53754.1"/>
    <property type="molecule type" value="Genomic_DNA"/>
</dbReference>
<dbReference type="EMBL" id="AL161534">
    <property type="protein sequence ID" value="CAB78304.1"/>
    <property type="molecule type" value="Genomic_DNA"/>
</dbReference>
<dbReference type="EMBL" id="CP002687">
    <property type="protein sequence ID" value="AEE83155.2"/>
    <property type="molecule type" value="Genomic_DNA"/>
</dbReference>
<dbReference type="EMBL" id="CP002687">
    <property type="protein sequence ID" value="AEE83156.2"/>
    <property type="molecule type" value="Genomic_DNA"/>
</dbReference>
<dbReference type="EMBL" id="BX826970">
    <property type="status" value="NOT_ANNOTATED_CDS"/>
    <property type="molecule type" value="mRNA"/>
</dbReference>
<dbReference type="EMBL" id="AY463611">
    <property type="protein sequence ID" value="AAR28013.1"/>
    <property type="molecule type" value="mRNA"/>
</dbReference>
<dbReference type="PIR" id="D85135">
    <property type="entry name" value="D85135"/>
</dbReference>
<dbReference type="RefSeq" id="NP_001319913.1">
    <molecule id="Q9SU25-2"/>
    <property type="nucleotide sequence ID" value="NM_001340791.1"/>
</dbReference>
<dbReference type="RefSeq" id="NP_001319914.1">
    <molecule id="Q9SU25-1"/>
    <property type="nucleotide sequence ID" value="NM_001340792.1"/>
</dbReference>
<dbReference type="SMR" id="Q9SU25"/>
<dbReference type="BioGRID" id="12172">
    <property type="interactions" value="2"/>
</dbReference>
<dbReference type="FunCoup" id="Q9SU25">
    <property type="interactions" value="1039"/>
</dbReference>
<dbReference type="STRING" id="3702.Q9SU25"/>
<dbReference type="iPTMnet" id="Q9SU25"/>
<dbReference type="PaxDb" id="3702-AT4G12610.2"/>
<dbReference type="ProteomicsDB" id="234111">
    <molecule id="Q9SU25-1"/>
</dbReference>
<dbReference type="EnsemblPlants" id="AT4G12610.1">
    <molecule id="Q9SU25-2"/>
    <property type="protein sequence ID" value="AT4G12610.1"/>
    <property type="gene ID" value="AT4G12610"/>
</dbReference>
<dbReference type="EnsemblPlants" id="AT4G12610.2">
    <molecule id="Q9SU25-1"/>
    <property type="protein sequence ID" value="AT4G12610.2"/>
    <property type="gene ID" value="AT4G12610"/>
</dbReference>
<dbReference type="GeneID" id="826874"/>
<dbReference type="Gramene" id="AT4G12610.1">
    <molecule id="Q9SU25-2"/>
    <property type="protein sequence ID" value="AT4G12610.1"/>
    <property type="gene ID" value="AT4G12610"/>
</dbReference>
<dbReference type="Gramene" id="AT4G12610.2">
    <molecule id="Q9SU25-1"/>
    <property type="protein sequence ID" value="AT4G12610.2"/>
    <property type="gene ID" value="AT4G12610"/>
</dbReference>
<dbReference type="KEGG" id="ath:AT4G12610"/>
<dbReference type="Araport" id="AT4G12610"/>
<dbReference type="TAIR" id="AT4G12610">
    <property type="gene designation" value="RAP74"/>
</dbReference>
<dbReference type="eggNOG" id="KOG2393">
    <property type="taxonomic scope" value="Eukaryota"/>
</dbReference>
<dbReference type="HOGENOM" id="CLU_020656_0_0_1"/>
<dbReference type="InParanoid" id="Q9SU25"/>
<dbReference type="OMA" id="VTCGKTM"/>
<dbReference type="PhylomeDB" id="Q9SU25"/>
<dbReference type="CD-CODE" id="4299E36E">
    <property type="entry name" value="Nucleolus"/>
</dbReference>
<dbReference type="PRO" id="PR:Q9SU25"/>
<dbReference type="Proteomes" id="UP000006548">
    <property type="component" value="Chromosome 4"/>
</dbReference>
<dbReference type="ExpressionAtlas" id="Q9SU25">
    <property type="expression patterns" value="baseline and differential"/>
</dbReference>
<dbReference type="GO" id="GO:0005634">
    <property type="term" value="C:nucleus"/>
    <property type="evidence" value="ECO:0007669"/>
    <property type="project" value="UniProtKB-SubCell"/>
</dbReference>
<dbReference type="GO" id="GO:0003677">
    <property type="term" value="F:DNA binding"/>
    <property type="evidence" value="ECO:0007669"/>
    <property type="project" value="UniProtKB-KW"/>
</dbReference>
<dbReference type="GO" id="GO:0032968">
    <property type="term" value="P:positive regulation of transcription elongation by RNA polymerase II"/>
    <property type="evidence" value="ECO:0007669"/>
    <property type="project" value="InterPro"/>
</dbReference>
<dbReference type="GO" id="GO:0006367">
    <property type="term" value="P:transcription initiation at RNA polymerase II promoter"/>
    <property type="evidence" value="ECO:0007669"/>
    <property type="project" value="InterPro"/>
</dbReference>
<dbReference type="FunFam" id="1.10.10.10:FF:001456">
    <property type="entry name" value="Transcription initiation factor IIF subunit alpha"/>
    <property type="match status" value="1"/>
</dbReference>
<dbReference type="Gene3D" id="1.10.10.10">
    <property type="entry name" value="Winged helix-like DNA-binding domain superfamily/Winged helix DNA-binding domain"/>
    <property type="match status" value="2"/>
</dbReference>
<dbReference type="InterPro" id="IPR008851">
    <property type="entry name" value="TFIIF-alpha"/>
</dbReference>
<dbReference type="InterPro" id="IPR011039">
    <property type="entry name" value="TFIIF_interaction"/>
</dbReference>
<dbReference type="InterPro" id="IPR036388">
    <property type="entry name" value="WH-like_DNA-bd_sf"/>
</dbReference>
<dbReference type="InterPro" id="IPR036390">
    <property type="entry name" value="WH_DNA-bd_sf"/>
</dbReference>
<dbReference type="PANTHER" id="PTHR13011:SF0">
    <property type="entry name" value="GENERAL TRANSCRIPTION FACTOR IIF SUBUNIT 1"/>
    <property type="match status" value="1"/>
</dbReference>
<dbReference type="PANTHER" id="PTHR13011">
    <property type="entry name" value="TFIIF-ALPHA"/>
    <property type="match status" value="1"/>
</dbReference>
<dbReference type="Pfam" id="PF05793">
    <property type="entry name" value="TFIIF_alpha"/>
    <property type="match status" value="2"/>
</dbReference>
<dbReference type="SUPFAM" id="SSF50916">
    <property type="entry name" value="Rap30/74 interaction domains"/>
    <property type="match status" value="1"/>
</dbReference>
<dbReference type="SUPFAM" id="SSF46785">
    <property type="entry name" value="Winged helix' DNA-binding domain"/>
    <property type="match status" value="2"/>
</dbReference>
<accession>Q9SU25</accession>
<accession>F4JRD5</accession>
<accession>F4JRD6</accession>
<accession>Q6S7B9</accession>
<keyword id="KW-0025">Alternative splicing</keyword>
<keyword id="KW-0238">DNA-binding</keyword>
<keyword id="KW-0539">Nucleus</keyword>
<keyword id="KW-1185">Reference proteome</keyword>
<keyword id="KW-0804">Transcription</keyword>
<keyword id="KW-0805">Transcription regulation</keyword>
<sequence>MSNCLQLNTSCVGCGSQSDLYGSSCRHMTLCLKCGRTMAQNKSKCHECGTVVTRLIREYNVRAAAPTDKNYFIGRFVTGLPNFKKGSENKWSLRKDIPQGRQFTDAQREKLKNKPWILEDETGQFQYQGHLEGSQSATYYLLVMQNKEFVAIPAGSWYNFNKVAQYKQLTLEEAEEKMKNRRKTADGYQRWMMKAANNGPALFGEVDNEKESGGTSGGGGRGRKKSSGGDEEEGNVSDRGDEDEEEEASRKSRLGLNRKSNDDDDEEGPRGGDLDMDDDDIEKGDDWEHEEIFTDDDEAVGNDPEEREDLLAPEIPAPPEIKQDEDDEENEEEEGGLSKSGKELKKLLGKANGLDESDEDDDDDSDDEEETNYGTVTNSKQKEAAKEEPVDNAPAKPAPSGPPRGTPPAKPSKGKRKLNDGDSKKPSSSVQKKVKTENDPKSSLKEERANTVSKSNTPTKAVKAEPASAPASSSSAATGPVTEDEIRAVLMEKKQVTTQDLVSRFKARLKTKEDKNAFANILRKISKIQKNAGSQNFVVLREKCQPKPGKRESRVNKLNIRSNLQPRKMELVTEDEIRKVLMEKKQLTTLELVMRFKERLTTTEDKDSFSHILKKIAKLQKNPGSEKFVVVLRDNVTPLASDLTRLSIS</sequence>
<organism>
    <name type="scientific">Arabidopsis thaliana</name>
    <name type="common">Mouse-ear cress</name>
    <dbReference type="NCBI Taxonomy" id="3702"/>
    <lineage>
        <taxon>Eukaryota</taxon>
        <taxon>Viridiplantae</taxon>
        <taxon>Streptophyta</taxon>
        <taxon>Embryophyta</taxon>
        <taxon>Tracheophyta</taxon>
        <taxon>Spermatophyta</taxon>
        <taxon>Magnoliopsida</taxon>
        <taxon>eudicotyledons</taxon>
        <taxon>Gunneridae</taxon>
        <taxon>Pentapetalae</taxon>
        <taxon>rosids</taxon>
        <taxon>malvids</taxon>
        <taxon>Brassicales</taxon>
        <taxon>Brassicaceae</taxon>
        <taxon>Camelineae</taxon>
        <taxon>Arabidopsis</taxon>
    </lineage>
</organism>
<proteinExistence type="evidence at protein level"/>
<comment type="function">
    <text evidence="1">TFIIF is a general transcription initiation factor that binds to RNA polymerase II and helps to recruit it to the initiation complex in collaboration with TFIIB. It promotes transcription elongation (By similarity).</text>
</comment>
<comment type="subunit">
    <text evidence="1 3">Heterodimer of an alpha and a beta subunit (By similarity). Interacts with CPL3 and CPL4.</text>
</comment>
<comment type="subcellular location">
    <subcellularLocation>
        <location evidence="3">Nucleus</location>
    </subcellularLocation>
</comment>
<comment type="alternative products">
    <event type="alternative splicing"/>
    <isoform>
        <id>Q9SU25-1</id>
        <name>1</name>
        <sequence type="displayed"/>
    </isoform>
    <isoform>
        <id>Q9SU25-2</id>
        <name>2</name>
        <sequence type="described" ref="VSP_037404"/>
    </isoform>
</comment>
<comment type="similarity">
    <text evidence="4">Belongs to the TFIIF alpha subunit family.</text>
</comment>